<accession>Q2N7F4</accession>
<sequence>MAILSDKWIREAAQTRGMIEPFEEAQRRDGCISYGLSSFGYDARVAPEFKIFTNVNSAVVDPKDFDGDSLVDRETEVCIIPPNSFALARTVEYFRIPEDVLVICLGKSTYARCGIIVNVTPLEPGWEGHVTLEFSNTTPLPAKIYANEGACQFLFLQGNERPEVTYADRAGKYMGQRGVTLPRL</sequence>
<keyword id="KW-0378">Hydrolase</keyword>
<keyword id="KW-0546">Nucleotide metabolism</keyword>
<keyword id="KW-0547">Nucleotide-binding</keyword>
<keyword id="KW-1185">Reference proteome</keyword>
<name>DCD_ERYLH</name>
<feature type="chain" id="PRO_1000009722" description="dCTP deaminase">
    <location>
        <begin position="1"/>
        <end position="184"/>
    </location>
</feature>
<feature type="active site" description="Proton donor/acceptor" evidence="1">
    <location>
        <position position="133"/>
    </location>
</feature>
<feature type="binding site" evidence="1">
    <location>
        <begin position="107"/>
        <end position="112"/>
    </location>
    <ligand>
        <name>dCTP</name>
        <dbReference type="ChEBI" id="CHEBI:61481"/>
    </ligand>
</feature>
<feature type="binding site" evidence="1">
    <location>
        <begin position="131"/>
        <end position="133"/>
    </location>
    <ligand>
        <name>dCTP</name>
        <dbReference type="ChEBI" id="CHEBI:61481"/>
    </ligand>
</feature>
<feature type="binding site" evidence="1">
    <location>
        <position position="152"/>
    </location>
    <ligand>
        <name>dCTP</name>
        <dbReference type="ChEBI" id="CHEBI:61481"/>
    </ligand>
</feature>
<feature type="binding site" evidence="1">
    <location>
        <position position="166"/>
    </location>
    <ligand>
        <name>dCTP</name>
        <dbReference type="ChEBI" id="CHEBI:61481"/>
    </ligand>
</feature>
<feature type="binding site" evidence="1">
    <location>
        <position position="176"/>
    </location>
    <ligand>
        <name>dCTP</name>
        <dbReference type="ChEBI" id="CHEBI:61481"/>
    </ligand>
</feature>
<gene>
    <name evidence="1" type="primary">dcd</name>
    <name type="ordered locus">ELI_11475</name>
</gene>
<protein>
    <recommendedName>
        <fullName evidence="1">dCTP deaminase</fullName>
        <ecNumber evidence="1">3.5.4.13</ecNumber>
    </recommendedName>
    <alternativeName>
        <fullName evidence="1">Deoxycytidine triphosphate deaminase</fullName>
    </alternativeName>
</protein>
<evidence type="ECO:0000255" key="1">
    <source>
        <dbReference type="HAMAP-Rule" id="MF_00146"/>
    </source>
</evidence>
<reference key="1">
    <citation type="journal article" date="2009" name="J. Bacteriol.">
        <title>Complete genome sequence of Erythrobacter litoralis HTCC2594.</title>
        <authorList>
            <person name="Oh H.M."/>
            <person name="Giovannoni S.J."/>
            <person name="Ferriera S."/>
            <person name="Johnson J."/>
            <person name="Cho J.C."/>
        </authorList>
    </citation>
    <scope>NUCLEOTIDE SEQUENCE [LARGE SCALE GENOMIC DNA]</scope>
    <source>
        <strain>HTCC2594</strain>
    </source>
</reference>
<proteinExistence type="inferred from homology"/>
<organism>
    <name type="scientific">Erythrobacter litoralis (strain HTCC2594)</name>
    <dbReference type="NCBI Taxonomy" id="314225"/>
    <lineage>
        <taxon>Bacteria</taxon>
        <taxon>Pseudomonadati</taxon>
        <taxon>Pseudomonadota</taxon>
        <taxon>Alphaproteobacteria</taxon>
        <taxon>Sphingomonadales</taxon>
        <taxon>Erythrobacteraceae</taxon>
        <taxon>Erythrobacter/Porphyrobacter group</taxon>
        <taxon>Erythrobacter</taxon>
    </lineage>
</organism>
<dbReference type="EC" id="3.5.4.13" evidence="1"/>
<dbReference type="EMBL" id="CP000157">
    <property type="protein sequence ID" value="ABC64387.1"/>
    <property type="molecule type" value="Genomic_DNA"/>
</dbReference>
<dbReference type="RefSeq" id="WP_011415210.1">
    <property type="nucleotide sequence ID" value="NC_007722.1"/>
</dbReference>
<dbReference type="SMR" id="Q2N7F4"/>
<dbReference type="STRING" id="314225.ELI_11475"/>
<dbReference type="KEGG" id="eli:ELI_11475"/>
<dbReference type="eggNOG" id="COG0717">
    <property type="taxonomic scope" value="Bacteria"/>
</dbReference>
<dbReference type="HOGENOM" id="CLU_087476_4_0_5"/>
<dbReference type="OrthoDB" id="9780956at2"/>
<dbReference type="UniPathway" id="UPA00610">
    <property type="reaction ID" value="UER00665"/>
</dbReference>
<dbReference type="Proteomes" id="UP000008808">
    <property type="component" value="Chromosome"/>
</dbReference>
<dbReference type="GO" id="GO:0008829">
    <property type="term" value="F:dCTP deaminase activity"/>
    <property type="evidence" value="ECO:0007669"/>
    <property type="project" value="UniProtKB-UniRule"/>
</dbReference>
<dbReference type="GO" id="GO:0000166">
    <property type="term" value="F:nucleotide binding"/>
    <property type="evidence" value="ECO:0007669"/>
    <property type="project" value="UniProtKB-KW"/>
</dbReference>
<dbReference type="GO" id="GO:0006226">
    <property type="term" value="P:dUMP biosynthetic process"/>
    <property type="evidence" value="ECO:0007669"/>
    <property type="project" value="UniProtKB-UniPathway"/>
</dbReference>
<dbReference type="GO" id="GO:0006229">
    <property type="term" value="P:dUTP biosynthetic process"/>
    <property type="evidence" value="ECO:0007669"/>
    <property type="project" value="UniProtKB-UniRule"/>
</dbReference>
<dbReference type="CDD" id="cd07557">
    <property type="entry name" value="trimeric_dUTPase"/>
    <property type="match status" value="1"/>
</dbReference>
<dbReference type="FunFam" id="2.70.40.10:FF:000001">
    <property type="entry name" value="dCTP deaminase"/>
    <property type="match status" value="1"/>
</dbReference>
<dbReference type="Gene3D" id="2.70.40.10">
    <property type="match status" value="1"/>
</dbReference>
<dbReference type="HAMAP" id="MF_00146">
    <property type="entry name" value="dCTP_deaminase"/>
    <property type="match status" value="1"/>
</dbReference>
<dbReference type="InterPro" id="IPR011962">
    <property type="entry name" value="dCTP_deaminase"/>
</dbReference>
<dbReference type="InterPro" id="IPR036157">
    <property type="entry name" value="dUTPase-like_sf"/>
</dbReference>
<dbReference type="InterPro" id="IPR033704">
    <property type="entry name" value="dUTPase_trimeric"/>
</dbReference>
<dbReference type="NCBIfam" id="TIGR02274">
    <property type="entry name" value="dCTP_deam"/>
    <property type="match status" value="1"/>
</dbReference>
<dbReference type="PANTHER" id="PTHR42680">
    <property type="entry name" value="DCTP DEAMINASE"/>
    <property type="match status" value="1"/>
</dbReference>
<dbReference type="PANTHER" id="PTHR42680:SF3">
    <property type="entry name" value="DCTP DEAMINASE"/>
    <property type="match status" value="1"/>
</dbReference>
<dbReference type="Pfam" id="PF22769">
    <property type="entry name" value="DCD"/>
    <property type="match status" value="1"/>
</dbReference>
<dbReference type="SUPFAM" id="SSF51283">
    <property type="entry name" value="dUTPase-like"/>
    <property type="match status" value="1"/>
</dbReference>
<comment type="function">
    <text evidence="1">Catalyzes the deamination of dCTP to dUTP.</text>
</comment>
<comment type="catalytic activity">
    <reaction evidence="1">
        <text>dCTP + H2O + H(+) = dUTP + NH4(+)</text>
        <dbReference type="Rhea" id="RHEA:22680"/>
        <dbReference type="ChEBI" id="CHEBI:15377"/>
        <dbReference type="ChEBI" id="CHEBI:15378"/>
        <dbReference type="ChEBI" id="CHEBI:28938"/>
        <dbReference type="ChEBI" id="CHEBI:61481"/>
        <dbReference type="ChEBI" id="CHEBI:61555"/>
        <dbReference type="EC" id="3.5.4.13"/>
    </reaction>
</comment>
<comment type="pathway">
    <text evidence="1">Pyrimidine metabolism; dUMP biosynthesis; dUMP from dCTP (dUTP route): step 1/2.</text>
</comment>
<comment type="subunit">
    <text evidence="1">Homotrimer.</text>
</comment>
<comment type="similarity">
    <text evidence="1">Belongs to the dCTP deaminase family.</text>
</comment>